<gene>
    <name evidence="9" type="primary">kscP</name>
</gene>
<comment type="function">
    <text evidence="3 4 6 8">Thermostable pepstatin-insensitive serine-carboxyl proteinase (PubMed:10965051, PubMed:11983085, PubMed:8416942). Preferentially hydrolyzes synthetic peptides having an Ala or Pro residue at the P2 position and charged amino acids such as Glu or Arg at the P2' position (PubMed:10965051). In vitro, specifically hydrolyzes the Leu-15-Tyr-16 peptide bond in oxidized insulin B-chain (PubMed:8416942). Additional cleavage of oxidized insulin B-chain at Phe-25-Tyr-26 is detected at a considerably lower rate (PubMed:8416942). Can hydrolyze collagen and the chromogenic substrate azocoll (PubMed:12513991). Shows lower activity with albumin and casein (PubMed:12513991). Shows very weak tripeptidyl peptidase activity (PubMed:11983085).</text>
</comment>
<comment type="catalytic activity">
    <reaction evidence="3 4 5 7 8">
        <text>The enzyme preferentially hydrolyzes peptides having an Ala or Pro residue at P2 position and prefers such charged amino acid residues as Glu or Arg at the P2' position. In the oxidized insulin B chain, kumamolysin preferentially cleaves between Leu(15) and Tyr(16).</text>
        <dbReference type="EC" id="3.4.21.123"/>
    </reaction>
</comment>
<comment type="cofactor">
    <cofactor evidence="5 7">
        <name>Ca(2+)</name>
        <dbReference type="ChEBI" id="CHEBI:29108"/>
    </cofactor>
    <text evidence="5 7">Binds 1 Ca(2+) ion per subunit.</text>
</comment>
<comment type="activity regulation">
    <text evidence="4 8">Inactivated at 22.4 and 37 degrees Celsius, but not at 60 degrees Celsius, by aldehyde-type inhibitors such as acetyl-Ile-Ala-Phe-CHO and acetyl-Ile-Pro-Phe-CHO (PubMed:11983085). Insensitive to the known carboxyl proteinase inhibitors pepstatin, diazoacetyl-DL-norleucine methyl ester (DAN) and 1,2-epoxy-3-(p-nitrophenoxy)propane (EPNP) (PubMed:8416942). Not inhibited by Ala-Ala-Phe-chloromethylketone, an inhibitor of the human tripeptidyl-peptidase 1 (PubMed:11983085).</text>
</comment>
<comment type="biophysicochemical properties">
    <kinetics>
        <KM evidence="3">41 uM for Lys-Pro-Ile-Pro-Phe-p-nitrophenylalanine-Arg-Leu</KM>
        <KM evidence="4">69 uM for Lys-Pro-Ile-Glu-Phe-p-nitrophenylalanine-Arg-Leu (at 60 degrees Celsius)</KM>
        <KM evidence="4">24 uM for Lys-Pro-Ile-Glu-Phe-p-nitrophenylalanine-Arg-Leu (at 37 degrees Celsius)</KM>
        <KM evidence="4">17 uM for Lys-Pro-Ile-Glu-Phe-p-nitrophenylalanine-Arg-Leu (at 22.4 degrees Celsius)</KM>
        <KM evidence="7">29 uM for Lys-Pro-Ile-Ala-Phe-p-nitrophenylalanine-Arg-Leu (at 60 degrees Celsius and pH 3.5)</KM>
        <KM evidence="8">0.09 mM for insulin B-chain (at pH 3.0 and 30 degrees Celsius)</KM>
        <text evidence="3 7 8">kcat is 176 sec(-1) with Lys-Pro-Ile-Pro-Phe-p-nitrophenylalanine-Arg-Leu as substrate (PubMed:10965051). kcat is 6.02 sec(-1) with Lys-Pro-Ile-Ala-Phe-p-nitrophenylalanine-Arg-Leu as substrate (at 60 degrees Celsius and pH 3.5) (PubMed:15242607). kcat is 71 sec(-1) with insulin B-chain as substrate (at pH 3.0 and 30 degrees Celsius) (PubMed:8416942).</text>
    </kinetics>
    <phDependence>
        <text evidence="8">Optimum pH is 3.0 (PubMed:8416942). Is completely stable in the pH range 2.0-4.0 at 50 degrees Celsius for 24 hours (PubMed:8416942).</text>
    </phDependence>
    <temperatureDependence>
        <text evidence="8">Optimum temperature is 70 degrees Celsius (PubMed:8416942). Retains 60% of the original activity at 80 degrees Celsius for 10 minutes, but loses its proteolytic activity after 10 minutes at 90 degrees Celsius (PubMed:8416942).</text>
    </temperatureDependence>
</comment>
<comment type="subunit">
    <text evidence="5">Forms monomeric and dimeric crystals.</text>
</comment>
<comment type="subcellular location">
    <subcellularLocation>
        <location evidence="8">Secreted</location>
    </subcellularLocation>
</comment>
<comment type="domain">
    <text evidence="7">The core of its prodomain resembles the prodomains of the pro-subtilisins and of the pro-protein convertases (PubMed:15242607). The prodomain may stabilize (by interacting with helices h4 and h5) a folding intermediate of the catalytic domain (PubMed:15242607). The catalytic domain has adopted a mature-like conformation already in the proform (PubMed:15242607).</text>
</comment>
<comment type="PTM">
    <text evidence="4 5 7">Autocatalytically processed.</text>
</comment>
<reference key="1">
    <citation type="journal article" date="2002" name="J. Biochem.">
        <title>A CLN2-related and thermostable serine-carboxyl proteinase, kumamolysin: cloning, expression, and identification of catalytic serine residue.</title>
        <authorList>
            <person name="Oyama H."/>
            <person name="Hamada T."/>
            <person name="Ogasawara S."/>
            <person name="Uchida K."/>
            <person name="Murao S."/>
            <person name="Beyer B.B."/>
            <person name="Dunn B.M."/>
            <person name="Oda K."/>
        </authorList>
    </citation>
    <scope>NUCLEOTIDE SEQUENCE [GENOMIC DNA]</scope>
    <scope>PROTEIN SEQUENCE OF 189-203; 282-320; 332-364; 382-402; 412-424 AND 482-538</scope>
    <scope>FUNCTION</scope>
    <scope>CATALYTIC ACTIVITY</scope>
    <scope>ACTIVITY REGULATION</scope>
    <scope>BIOPHYSICOCHEMICAL PROPERTIES</scope>
    <scope>PROTEOLYTIC CLEAVAGE</scope>
    <scope>MUTAGENESIS OF SER-466</scope>
    <source>
        <strain>MN-32</strain>
    </source>
</reference>
<reference key="2">
    <citation type="journal article" date="1993" name="J. Biol. Chem.">
        <title>Purification and characterization of kumamolysin, a novel thermostable pepstatin-insensitive carboxyl proteinase from Bacillus novosp. MN-32.</title>
        <authorList>
            <person name="Murao S."/>
            <person name="Ohkuni K."/>
            <person name="Nagao M."/>
            <person name="Hirayama K."/>
            <person name="Fukuhara K."/>
            <person name="Oda K."/>
            <person name="Oyama H."/>
            <person name="Shin T."/>
        </authorList>
    </citation>
    <scope>FUNCTION</scope>
    <scope>CATALYTIC ACTIVITY</scope>
    <scope>ACTIVITY REGULATION</scope>
    <scope>BIOPHYSICOCHEMICAL PROPERTIES</scope>
    <scope>SUBCELLULAR LOCATION</scope>
    <source>
        <strain>MN-32</strain>
    </source>
</reference>
<reference key="3">
    <citation type="journal article" date="2000" name="J. Biochem.">
        <title>Subsite preferences of pepstatin-insensitive carboxyl proteinases from prokaryotes: kumamolysin, a thermostable pepstatin-insensitive carboxyl proteinase.</title>
        <authorList>
            <person name="Oda K."/>
            <person name="Ogasawara S."/>
            <person name="Oyama H."/>
            <person name="Dunn B.M."/>
        </authorList>
    </citation>
    <scope>FUNCTION</scope>
    <scope>CATALYTIC ACTIVITY</scope>
    <scope>SUBSTRATE SPECIFICITY</scope>
    <scope>BIOPHYSICOCHEMICAL PROPERTIES</scope>
    <source>
        <strain>MN-32</strain>
    </source>
</reference>
<reference key="4">
    <citation type="journal article" date="2003" name="Appl. Environ. Microbiol.">
        <title>Collagenolytic serine-carboxyl proteinase from Alicyclobacillus sendaiensis strain NTAP-1: purification, characterization, gene cloning, and heterologous expression.</title>
        <authorList>
            <person name="Tsuruoka N."/>
            <person name="Nakayama T."/>
            <person name="Ashida M."/>
            <person name="Hemmi H."/>
            <person name="Nakao M."/>
            <person name="Minakata H."/>
            <person name="Oyama H."/>
            <person name="Oda K."/>
            <person name="Nishino T."/>
        </authorList>
    </citation>
    <scope>FUNCTION AS A COLLAGENOLYTIC PROTEINASE</scope>
</reference>
<reference evidence="14 15 16 17" key="5">
    <citation type="journal article" date="2002" name="Structure">
        <title>The 1.4 a crystal structure of kumamolysin: a thermostable serine-carboxyl-type proteinase.</title>
        <authorList>
            <person name="Comellas-Bigler M."/>
            <person name="Fuentes-Prior P."/>
            <person name="Maskos K."/>
            <person name="Huber R."/>
            <person name="Oyama H."/>
            <person name="Uchida K."/>
            <person name="Dunn B.M."/>
            <person name="Oda K."/>
            <person name="Bode W."/>
        </authorList>
    </citation>
    <scope>X-RAY CRYSTALLOGRAPHY (1.38 ANGSTROMS) OF 189-545 IN COMPLEXES WITH CA(2+) AND ALDEHYDE INHIBITORS</scope>
    <scope>CATALYTIC ACTIVITY</scope>
    <scope>REACTION MECHANISM</scope>
    <scope>ACTIVE SITE</scope>
    <scope>COFACTOR</scope>
    <scope>PROTEOLYTIC CLEAVAGE</scope>
    <scope>SUBUNIT</scope>
    <scope>MUTAGENESIS OF GLU-266; ASP-270; ASP-352; SER-466 AND ASP-504</scope>
    <source>
        <strain>MN-32</strain>
    </source>
</reference>
<reference evidence="18 19 20" key="6">
    <citation type="journal article" date="2004" name="Structure">
        <title>1.2 A crystal structure of the serine carboxyl proteinase pro-kumamolisin; structure of an intact pro-subtilase.</title>
        <authorList>
            <person name="Comellas-Bigler M."/>
            <person name="Maskos K."/>
            <person name="Huber R."/>
            <person name="Oyama H."/>
            <person name="Oda K."/>
            <person name="Bode W."/>
        </authorList>
    </citation>
    <scope>X-RAY CRYSTALLOGRAPHY (1.18 ANGSTROMS) OF PRO-KUMAMOLISIN MUTANT ALA-466 IN COMPLEX WITH CA(2+) AND OF 189-552 OF MUTANTS ALA-220 AND ALA-317 IN COMPLEX WITH CA(2+)</scope>
    <scope>CATALYTIC ACTIVITY</scope>
    <scope>COFACTOR</scope>
    <scope>BIOPHYSICOCHEMICAL PROPERTIES</scope>
    <scope>DOMAIN</scope>
    <scope>PROTEOLYTIC CLEAVAGE</scope>
    <scope>ACTIVE SITE</scope>
    <scope>MUTAGENESIS OF GLU-220; TRP-317 AND SER-466</scope>
    <source>
        <strain>MN-32</strain>
    </source>
</reference>
<keyword id="KW-0002">3D-structure</keyword>
<keyword id="KW-0106">Calcium</keyword>
<keyword id="KW-0903">Direct protein sequencing</keyword>
<keyword id="KW-0378">Hydrolase</keyword>
<keyword id="KW-0479">Metal-binding</keyword>
<keyword id="KW-0645">Protease</keyword>
<keyword id="KW-0964">Secreted</keyword>
<keyword id="KW-0720">Serine protease</keyword>
<keyword id="KW-0732">Signal</keyword>
<keyword id="KW-0865">Zymogen</keyword>
<organism>
    <name type="scientific">Bacillus sp. (strain MN-32)</name>
    <dbReference type="NCBI Taxonomy" id="198803"/>
    <lineage>
        <taxon>Bacteria</taxon>
        <taxon>Bacillati</taxon>
        <taxon>Bacillota</taxon>
        <taxon>Bacilli</taxon>
        <taxon>Bacillales</taxon>
        <taxon>Bacillaceae</taxon>
        <taxon>Bacillus</taxon>
    </lineage>
</organism>
<evidence type="ECO:0000255" key="1">
    <source>
        <dbReference type="PROSITE-ProRule" id="PRU01032"/>
    </source>
</evidence>
<evidence type="ECO:0000256" key="2">
    <source>
        <dbReference type="SAM" id="MobiDB-lite"/>
    </source>
</evidence>
<evidence type="ECO:0000269" key="3">
    <source>
    </source>
</evidence>
<evidence type="ECO:0000269" key="4">
    <source>
    </source>
</evidence>
<evidence type="ECO:0000269" key="5">
    <source>
    </source>
</evidence>
<evidence type="ECO:0000269" key="6">
    <source>
    </source>
</evidence>
<evidence type="ECO:0000269" key="7">
    <source>
    </source>
</evidence>
<evidence type="ECO:0000269" key="8">
    <source>
    </source>
</evidence>
<evidence type="ECO:0000303" key="9">
    <source>
    </source>
</evidence>
<evidence type="ECO:0000303" key="10">
    <source>
    </source>
</evidence>
<evidence type="ECO:0000303" key="11">
    <source>
    </source>
</evidence>
<evidence type="ECO:0000305" key="12">
    <source>
    </source>
</evidence>
<evidence type="ECO:0000305" key="13">
    <source>
    </source>
</evidence>
<evidence type="ECO:0007744" key="14">
    <source>
        <dbReference type="PDB" id="1GT9"/>
    </source>
</evidence>
<evidence type="ECO:0007744" key="15">
    <source>
        <dbReference type="PDB" id="1GTG"/>
    </source>
</evidence>
<evidence type="ECO:0007744" key="16">
    <source>
        <dbReference type="PDB" id="1GTJ"/>
    </source>
</evidence>
<evidence type="ECO:0007744" key="17">
    <source>
        <dbReference type="PDB" id="1GTL"/>
    </source>
</evidence>
<evidence type="ECO:0007744" key="18">
    <source>
        <dbReference type="PDB" id="1T1E"/>
    </source>
</evidence>
<evidence type="ECO:0007744" key="19">
    <source>
        <dbReference type="PDB" id="1T1G"/>
    </source>
</evidence>
<evidence type="ECO:0007744" key="20">
    <source>
        <dbReference type="PDB" id="1T1I"/>
    </source>
</evidence>
<evidence type="ECO:0007829" key="21">
    <source>
        <dbReference type="PDB" id="1T1E"/>
    </source>
</evidence>
<evidence type="ECO:0007829" key="22">
    <source>
        <dbReference type="PDB" id="1T1G"/>
    </source>
</evidence>
<name>KSCP_BACX2</name>
<proteinExistence type="evidence at protein level"/>
<accession>Q8RR56</accession>
<protein>
    <recommendedName>
        <fullName evidence="10">Kumamolisin</fullName>
        <ecNumber evidence="3 4 5 7 8">3.4.21.123</ecNumber>
    </recommendedName>
    <alternativeName>
        <fullName evidence="11">Kumamolysin</fullName>
    </alternativeName>
    <alternativeName>
        <fullName evidence="9">Kumamolysin serine-carboxyl proteinase</fullName>
        <shortName evidence="9">KSCP</shortName>
    </alternativeName>
</protein>
<dbReference type="EC" id="3.4.21.123" evidence="3 4 5 7 8"/>
<dbReference type="EMBL" id="AB070740">
    <property type="protein sequence ID" value="BAB85637.2"/>
    <property type="molecule type" value="Genomic_DNA"/>
</dbReference>
<dbReference type="PIR" id="JC7833">
    <property type="entry name" value="JC7833"/>
</dbReference>
<dbReference type="PDB" id="1GT9">
    <property type="method" value="X-ray"/>
    <property type="resolution" value="1.38 A"/>
    <property type="chains" value="1/2=189-545"/>
</dbReference>
<dbReference type="PDB" id="1GTG">
    <property type="method" value="X-ray"/>
    <property type="resolution" value="2.30 A"/>
    <property type="chains" value="1=189-545"/>
</dbReference>
<dbReference type="PDB" id="1GTJ">
    <property type="method" value="X-ray"/>
    <property type="resolution" value="1.75 A"/>
    <property type="chains" value="1/2=189-545"/>
</dbReference>
<dbReference type="PDB" id="1GTL">
    <property type="method" value="X-ray"/>
    <property type="resolution" value="2.80 A"/>
    <property type="chains" value="1/2=189-545"/>
</dbReference>
<dbReference type="PDB" id="1T1E">
    <property type="method" value="X-ray"/>
    <property type="resolution" value="1.18 A"/>
    <property type="chains" value="A=1-552"/>
</dbReference>
<dbReference type="PDB" id="1T1G">
    <property type="method" value="X-ray"/>
    <property type="resolution" value="1.18 A"/>
    <property type="chains" value="A=189-552"/>
</dbReference>
<dbReference type="PDB" id="1T1I">
    <property type="method" value="X-ray"/>
    <property type="resolution" value="1.28 A"/>
    <property type="chains" value="A=189-552"/>
</dbReference>
<dbReference type="PDBsum" id="1GT9"/>
<dbReference type="PDBsum" id="1GTG"/>
<dbReference type="PDBsum" id="1GTJ"/>
<dbReference type="PDBsum" id="1GTL"/>
<dbReference type="PDBsum" id="1T1E"/>
<dbReference type="PDBsum" id="1T1G"/>
<dbReference type="PDBsum" id="1T1I"/>
<dbReference type="SMR" id="Q8RR56"/>
<dbReference type="MEROPS" id="S53.004"/>
<dbReference type="KEGG" id="ag:BAB85637"/>
<dbReference type="EvolutionaryTrace" id="Q8RR56"/>
<dbReference type="GO" id="GO:0005576">
    <property type="term" value="C:extracellular region"/>
    <property type="evidence" value="ECO:0007669"/>
    <property type="project" value="UniProtKB-SubCell"/>
</dbReference>
<dbReference type="GO" id="GO:0046872">
    <property type="term" value="F:metal ion binding"/>
    <property type="evidence" value="ECO:0007669"/>
    <property type="project" value="UniProtKB-KW"/>
</dbReference>
<dbReference type="GO" id="GO:0004252">
    <property type="term" value="F:serine-type endopeptidase activity"/>
    <property type="evidence" value="ECO:0007669"/>
    <property type="project" value="InterPro"/>
</dbReference>
<dbReference type="GO" id="GO:0008240">
    <property type="term" value="F:tripeptidyl-peptidase activity"/>
    <property type="evidence" value="ECO:0007669"/>
    <property type="project" value="TreeGrafter"/>
</dbReference>
<dbReference type="GO" id="GO:0006508">
    <property type="term" value="P:proteolysis"/>
    <property type="evidence" value="ECO:0007669"/>
    <property type="project" value="UniProtKB-KW"/>
</dbReference>
<dbReference type="CDD" id="cd04056">
    <property type="entry name" value="Peptidases_S53"/>
    <property type="match status" value="1"/>
</dbReference>
<dbReference type="CDD" id="cd11377">
    <property type="entry name" value="Pro-peptidase_S53"/>
    <property type="match status" value="1"/>
</dbReference>
<dbReference type="Gene3D" id="3.40.50.200">
    <property type="entry name" value="Peptidase S8/S53 domain"/>
    <property type="match status" value="1"/>
</dbReference>
<dbReference type="InterPro" id="IPR000209">
    <property type="entry name" value="Peptidase_S8/S53_dom"/>
</dbReference>
<dbReference type="InterPro" id="IPR036852">
    <property type="entry name" value="Peptidase_S8/S53_dom_sf"/>
</dbReference>
<dbReference type="InterPro" id="IPR015366">
    <property type="entry name" value="S53_propep"/>
</dbReference>
<dbReference type="InterPro" id="IPR030400">
    <property type="entry name" value="Sedolisin_dom"/>
</dbReference>
<dbReference type="InterPro" id="IPR050819">
    <property type="entry name" value="Tripeptidyl-peptidase_I"/>
</dbReference>
<dbReference type="PANTHER" id="PTHR14218">
    <property type="entry name" value="PROTEASE S8 TRIPEPTIDYL PEPTIDASE I CLN2"/>
    <property type="match status" value="1"/>
</dbReference>
<dbReference type="PANTHER" id="PTHR14218:SF15">
    <property type="entry name" value="TRIPEPTIDYL-PEPTIDASE 1"/>
    <property type="match status" value="1"/>
</dbReference>
<dbReference type="Pfam" id="PF00082">
    <property type="entry name" value="Peptidase_S8"/>
    <property type="match status" value="1"/>
</dbReference>
<dbReference type="Pfam" id="PF09286">
    <property type="entry name" value="Pro-kuma_activ"/>
    <property type="match status" value="1"/>
</dbReference>
<dbReference type="SMART" id="SM00944">
    <property type="entry name" value="Pro-kuma_activ"/>
    <property type="match status" value="1"/>
</dbReference>
<dbReference type="SUPFAM" id="SSF54897">
    <property type="entry name" value="Protease propeptides/inhibitors"/>
    <property type="match status" value="1"/>
</dbReference>
<dbReference type="SUPFAM" id="SSF52743">
    <property type="entry name" value="Subtilisin-like"/>
    <property type="match status" value="1"/>
</dbReference>
<dbReference type="PROSITE" id="PS51695">
    <property type="entry name" value="SEDOLISIN"/>
    <property type="match status" value="1"/>
</dbReference>
<feature type="signal peptide" evidence="13">
    <location>
        <begin position="1"/>
        <end status="unknown"/>
    </location>
</feature>
<feature type="propeptide" id="PRO_0000461155" description="Removed in mature form" evidence="4">
    <location>
        <begin status="unknown"/>
        <end position="188"/>
    </location>
</feature>
<feature type="chain" id="PRO_0000461156" description="Kumamolisin" evidence="4">
    <location>
        <begin position="189"/>
        <end position="552"/>
    </location>
</feature>
<feature type="domain" description="Peptidase S53" evidence="1">
    <location>
        <begin position="193"/>
        <end position="546"/>
    </location>
</feature>
<feature type="region of interest" description="Disordered" evidence="2">
    <location>
        <begin position="1"/>
        <end position="34"/>
    </location>
</feature>
<feature type="compositionally biased region" description="Basic and acidic residues" evidence="2">
    <location>
        <begin position="1"/>
        <end position="17"/>
    </location>
</feature>
<feature type="active site" description="Charge relay system" evidence="12 13">
    <location>
        <position position="266"/>
    </location>
</feature>
<feature type="active site" description="Charge relay system" evidence="12 13">
    <location>
        <position position="270"/>
    </location>
</feature>
<feature type="active site" description="Charge relay system" evidence="12 13">
    <location>
        <position position="466"/>
    </location>
</feature>
<feature type="binding site" evidence="5 7 14 15 16 17 18 19 20">
    <location>
        <position position="504"/>
    </location>
    <ligand>
        <name>Ca(2+)</name>
        <dbReference type="ChEBI" id="CHEBI:29108"/>
    </ligand>
</feature>
<feature type="binding site" evidence="5 7 14 15 16 17 18 19 20">
    <location>
        <position position="505"/>
    </location>
    <ligand>
        <name>Ca(2+)</name>
        <dbReference type="ChEBI" id="CHEBI:29108"/>
    </ligand>
</feature>
<feature type="binding site" evidence="5 7 14 15 16 17 18 19 20">
    <location>
        <position position="522"/>
    </location>
    <ligand>
        <name>Ca(2+)</name>
        <dbReference type="ChEBI" id="CHEBI:29108"/>
    </ligand>
</feature>
<feature type="binding site" evidence="5 7 14 15 16 17 18 19 20">
    <location>
        <position position="524"/>
    </location>
    <ligand>
        <name>Ca(2+)</name>
        <dbReference type="ChEBI" id="CHEBI:29108"/>
    </ligand>
</feature>
<feature type="binding site" evidence="5 7 14 15 16 17 18 19 20">
    <location>
        <position position="526"/>
    </location>
    <ligand>
        <name>Ca(2+)</name>
        <dbReference type="ChEBI" id="CHEBI:29108"/>
    </ligand>
</feature>
<feature type="mutagenesis site" description="Retains auto-processing activity and 6% of wild-type activity. Causes the catalytic Ser-466 to adopt a presumably inactive nonnative conformation." evidence="7">
    <original>E</original>
    <variation>A</variation>
    <location>
        <position position="220"/>
    </location>
</feature>
<feature type="mutagenesis site" description="Loses both auto-processing activity and proteolytic activity." evidence="5">
    <original>E</original>
    <variation>A</variation>
    <location>
        <position position="266"/>
    </location>
</feature>
<feature type="mutagenesis site" description="Loses both auto-processing activity and proteolytic activity." evidence="5">
    <original>D</original>
    <variation>A</variation>
    <location>
        <position position="270"/>
    </location>
</feature>
<feature type="mutagenesis site" description="Retains auto-processing activity and 4% of wild-type activity. Shows consequent structural changes." evidence="7">
    <original>W</original>
    <variation>A</variation>
    <location>
        <position position="317"/>
    </location>
</feature>
<feature type="mutagenesis site" description="Loses both auto-processing activity and proteolytic activity." evidence="5">
    <original>D</original>
    <variation>A</variation>
    <location>
        <position position="352"/>
    </location>
</feature>
<feature type="mutagenesis site" description="Loses both auto-processing activity and proteolytic activity." evidence="4 5 7">
    <original>S</original>
    <variation>A</variation>
    <location>
        <position position="466"/>
    </location>
</feature>
<feature type="mutagenesis site" description="Retains auto-processing activity and 3% of wild-type proteolytic activity." evidence="5">
    <original>D</original>
    <variation>A</variation>
    <location>
        <position position="504"/>
    </location>
</feature>
<feature type="strand" evidence="21">
    <location>
        <begin position="14"/>
        <end position="16"/>
    </location>
</feature>
<feature type="strand" evidence="21">
    <location>
        <begin position="29"/>
        <end position="33"/>
    </location>
</feature>
<feature type="strand" evidence="21">
    <location>
        <begin position="39"/>
        <end position="46"/>
    </location>
</feature>
<feature type="helix" evidence="21">
    <location>
        <begin position="51"/>
        <end position="61"/>
    </location>
</feature>
<feature type="helix" evidence="21">
    <location>
        <begin position="74"/>
        <end position="81"/>
    </location>
</feature>
<feature type="helix" evidence="21">
    <location>
        <begin position="85"/>
        <end position="97"/>
    </location>
</feature>
<feature type="strand" evidence="21">
    <location>
        <begin position="101"/>
        <end position="106"/>
    </location>
</feature>
<feature type="turn" evidence="21">
    <location>
        <begin position="107"/>
        <end position="110"/>
    </location>
</feature>
<feature type="strand" evidence="21">
    <location>
        <begin position="111"/>
        <end position="117"/>
    </location>
</feature>
<feature type="helix" evidence="21">
    <location>
        <begin position="118"/>
        <end position="125"/>
    </location>
</feature>
<feature type="strand" evidence="21">
    <location>
        <begin position="130"/>
        <end position="133"/>
    </location>
</feature>
<feature type="strand" evidence="21">
    <location>
        <begin position="139"/>
        <end position="141"/>
    </location>
</feature>
<feature type="strand" evidence="21">
    <location>
        <begin position="147"/>
        <end position="149"/>
    </location>
</feature>
<feature type="turn" evidence="21">
    <location>
        <begin position="150"/>
        <end position="152"/>
    </location>
</feature>
<feature type="helix" evidence="21">
    <location>
        <begin position="153"/>
        <end position="155"/>
    </location>
</feature>
<feature type="strand" evidence="21">
    <location>
        <begin position="156"/>
        <end position="163"/>
    </location>
</feature>
<feature type="strand" evidence="22">
    <location>
        <begin position="192"/>
        <end position="194"/>
    </location>
</feature>
<feature type="helix" evidence="21">
    <location>
        <begin position="196"/>
        <end position="202"/>
    </location>
</feature>
<feature type="strand" evidence="21">
    <location>
        <begin position="215"/>
        <end position="222"/>
    </location>
</feature>
<feature type="helix" evidence="21">
    <location>
        <begin position="227"/>
        <end position="237"/>
    </location>
</feature>
<feature type="strand" evidence="21">
    <location>
        <begin position="244"/>
        <end position="249"/>
    </location>
</feature>
<feature type="helix" evidence="21">
    <location>
        <begin position="263"/>
        <end position="277"/>
    </location>
</feature>
<feature type="strand" evidence="21">
    <location>
        <begin position="281"/>
        <end position="287"/>
    </location>
</feature>
<feature type="helix" evidence="21">
    <location>
        <begin position="292"/>
        <end position="303"/>
    </location>
</feature>
<feature type="turn" evidence="21">
    <location>
        <begin position="306"/>
        <end position="308"/>
    </location>
</feature>
<feature type="strand" evidence="21">
    <location>
        <begin position="311"/>
        <end position="315"/>
    </location>
</feature>
<feature type="strand" evidence="21">
    <location>
        <begin position="317"/>
        <end position="320"/>
    </location>
</feature>
<feature type="helix" evidence="21">
    <location>
        <begin position="321"/>
        <end position="323"/>
    </location>
</feature>
<feature type="helix" evidence="21">
    <location>
        <begin position="326"/>
        <end position="341"/>
    </location>
</feature>
<feature type="strand" evidence="21">
    <location>
        <begin position="345"/>
        <end position="349"/>
    </location>
</feature>
<feature type="helix" evidence="21">
    <location>
        <begin position="354"/>
        <end position="356"/>
    </location>
</feature>
<feature type="strand" evidence="21">
    <location>
        <begin position="361"/>
        <end position="363"/>
    </location>
</feature>
<feature type="turn" evidence="21">
    <location>
        <begin position="369"/>
        <end position="371"/>
    </location>
</feature>
<feature type="strand" evidence="21">
    <location>
        <begin position="375"/>
        <end position="386"/>
    </location>
</feature>
<feature type="strand" evidence="21">
    <location>
        <begin position="389"/>
        <end position="395"/>
    </location>
</feature>
<feature type="helix" evidence="21">
    <location>
        <begin position="399"/>
        <end position="402"/>
    </location>
</feature>
<feature type="strand" evidence="21">
    <location>
        <begin position="411"/>
        <end position="413"/>
    </location>
</feature>
<feature type="turn" evidence="21">
    <location>
        <begin position="417"/>
        <end position="421"/>
    </location>
</feature>
<feature type="strand" evidence="21">
    <location>
        <begin position="440"/>
        <end position="444"/>
    </location>
</feature>
<feature type="helix" evidence="21">
    <location>
        <begin position="447"/>
        <end position="449"/>
    </location>
</feature>
<feature type="strand" evidence="21">
    <location>
        <begin position="451"/>
        <end position="455"/>
    </location>
</feature>
<feature type="strand" evidence="21">
    <location>
        <begin position="458"/>
        <end position="464"/>
    </location>
</feature>
<feature type="helix" evidence="21">
    <location>
        <begin position="465"/>
        <end position="467"/>
    </location>
</feature>
<feature type="helix" evidence="21">
    <location>
        <begin position="468"/>
        <end position="483"/>
    </location>
</feature>
<feature type="helix" evidence="21">
    <location>
        <begin position="491"/>
        <end position="494"/>
    </location>
</feature>
<feature type="helix" evidence="21">
    <location>
        <begin position="499"/>
        <end position="501"/>
    </location>
</feature>
<feature type="strand" evidence="21">
    <location>
        <begin position="513"/>
        <end position="516"/>
    </location>
</feature>
<feature type="strand" evidence="22">
    <location>
        <begin position="523"/>
        <end position="526"/>
    </location>
</feature>
<feature type="turn" evidence="21">
    <location>
        <begin position="527"/>
        <end position="529"/>
    </location>
</feature>
<feature type="helix" evidence="21">
    <location>
        <begin position="536"/>
        <end position="543"/>
    </location>
</feature>
<sequence length="552" mass="57743">MSDMEKPWKEEEKREVLAGHARRQAPQAVDKGPVTGDQRISVTVVLRRQRGDELEAHVERQAALAPHARVHLEREAFAASHGASLDDFAEIRKFAEAHGLTLDRAHVAAGTAVLSGPVDAVNQAFGVELRHFDHPDGSYRSYVGDVRVPASIAPLIEAVFGLDTRPVARPHFRLRRRAEGEFEARSQSAAPTAYTPLDVAQAYQFPEGLDGQGQCIAIIELGGGYDETSLAQYFASLGVSAPQVVSVSVDGATNQPTGDPNGPDGEVELDIEVAGALAPGAKIAVYFAPNTDAGFLNAITTAVHDPTHKPSIVSISWGGPEDSWAPASIAAMNRAFLDAAALGVTVLAAAGDSGSTDGEQDGLYHVDFPAASPYVLACGGTRLVASAGRIERETVWNDGPDGGSTGGGVSRIFPLPSWQERANVPPSANPGAGSGRGVPDVAGNADPATGYEVVIDGETTVIGGTSAVAPLFAALVARINQKLGKPVGYLNPTLYQLPPEVFHDITEGNNDIANRARIYQAGPGWDPCTGLGSPIGIRLLQALLPSASQAQP</sequence>